<proteinExistence type="inferred from homology"/>
<feature type="chain" id="PRO_0000252968" description="Fluoride-specific ion channel FluC 2">
    <location>
        <begin position="1"/>
        <end position="116"/>
    </location>
</feature>
<feature type="transmembrane region" description="Helical" evidence="1">
    <location>
        <begin position="3"/>
        <end position="23"/>
    </location>
</feature>
<feature type="transmembrane region" description="Helical" evidence="1">
    <location>
        <begin position="43"/>
        <end position="63"/>
    </location>
</feature>
<feature type="transmembrane region" description="Helical" evidence="1">
    <location>
        <begin position="96"/>
        <end position="116"/>
    </location>
</feature>
<feature type="binding site" evidence="1">
    <location>
        <position position="67"/>
    </location>
    <ligand>
        <name>Na(+)</name>
        <dbReference type="ChEBI" id="CHEBI:29101"/>
        <note>structural</note>
    </ligand>
</feature>
<feature type="binding site" evidence="1">
    <location>
        <position position="70"/>
    </location>
    <ligand>
        <name>Na(+)</name>
        <dbReference type="ChEBI" id="CHEBI:29101"/>
        <note>structural</note>
    </ligand>
</feature>
<gene>
    <name evidence="1" type="primary">fluC2</name>
    <name evidence="1" type="synonym">crcB2</name>
    <name type="ordered locus">NP_0026A</name>
</gene>
<evidence type="ECO:0000255" key="1">
    <source>
        <dbReference type="HAMAP-Rule" id="MF_00454"/>
    </source>
</evidence>
<accession>Q3IUS6</accession>
<sequence>MALLTALAVGAGGAAGAVARYAVGLSVGRRAVDTGLVNVFGSLLFGVAIGADFGGAPAVAVTVGFCGAFTTFSSFAVETVRLAEDGQRLAAAGNAVGTLAAALLAVFLGIALGAAL</sequence>
<protein>
    <recommendedName>
        <fullName evidence="1">Fluoride-specific ion channel FluC 2</fullName>
    </recommendedName>
</protein>
<name>FLUC2_NATPD</name>
<keyword id="KW-1003">Cell membrane</keyword>
<keyword id="KW-0407">Ion channel</keyword>
<keyword id="KW-0406">Ion transport</keyword>
<keyword id="KW-0472">Membrane</keyword>
<keyword id="KW-0479">Metal-binding</keyword>
<keyword id="KW-1185">Reference proteome</keyword>
<keyword id="KW-0915">Sodium</keyword>
<keyword id="KW-0812">Transmembrane</keyword>
<keyword id="KW-1133">Transmembrane helix</keyword>
<keyword id="KW-0813">Transport</keyword>
<dbReference type="EMBL" id="CR936257">
    <property type="protein sequence ID" value="CAI48104.1"/>
    <property type="molecule type" value="Genomic_DNA"/>
</dbReference>
<dbReference type="RefSeq" id="WP_011321743.1">
    <property type="nucleotide sequence ID" value="NC_007426.1"/>
</dbReference>
<dbReference type="SMR" id="Q3IUS6"/>
<dbReference type="STRING" id="348780.NP_0026A"/>
<dbReference type="EnsemblBacteria" id="CAI48104">
    <property type="protein sequence ID" value="CAI48104"/>
    <property type="gene ID" value="NP_0026A"/>
</dbReference>
<dbReference type="GeneID" id="3702630"/>
<dbReference type="KEGG" id="nph:NP_0026A"/>
<dbReference type="eggNOG" id="arCOG04701">
    <property type="taxonomic scope" value="Archaea"/>
</dbReference>
<dbReference type="HOGENOM" id="CLU_114342_2_1_2"/>
<dbReference type="OrthoDB" id="304656at2157"/>
<dbReference type="Proteomes" id="UP000002698">
    <property type="component" value="Chromosome"/>
</dbReference>
<dbReference type="GO" id="GO:0005886">
    <property type="term" value="C:plasma membrane"/>
    <property type="evidence" value="ECO:0007669"/>
    <property type="project" value="UniProtKB-SubCell"/>
</dbReference>
<dbReference type="GO" id="GO:0062054">
    <property type="term" value="F:fluoride channel activity"/>
    <property type="evidence" value="ECO:0007669"/>
    <property type="project" value="UniProtKB-UniRule"/>
</dbReference>
<dbReference type="GO" id="GO:0046872">
    <property type="term" value="F:metal ion binding"/>
    <property type="evidence" value="ECO:0007669"/>
    <property type="project" value="UniProtKB-KW"/>
</dbReference>
<dbReference type="GO" id="GO:0140114">
    <property type="term" value="P:cellular detoxification of fluoride"/>
    <property type="evidence" value="ECO:0007669"/>
    <property type="project" value="UniProtKB-UniRule"/>
</dbReference>
<dbReference type="HAMAP" id="MF_00454">
    <property type="entry name" value="FluC"/>
    <property type="match status" value="1"/>
</dbReference>
<dbReference type="InterPro" id="IPR003691">
    <property type="entry name" value="FluC"/>
</dbReference>
<dbReference type="Pfam" id="PF02537">
    <property type="entry name" value="CRCB"/>
    <property type="match status" value="1"/>
</dbReference>
<comment type="function">
    <text evidence="1">Fluoride-specific ion channel. Important for reducing fluoride concentration in the cell, thus reducing its toxicity.</text>
</comment>
<comment type="catalytic activity">
    <reaction evidence="1">
        <text>fluoride(in) = fluoride(out)</text>
        <dbReference type="Rhea" id="RHEA:76159"/>
        <dbReference type="ChEBI" id="CHEBI:17051"/>
    </reaction>
    <physiologicalReaction direction="left-to-right" evidence="1">
        <dbReference type="Rhea" id="RHEA:76160"/>
    </physiologicalReaction>
</comment>
<comment type="activity regulation">
    <text evidence="1">Na(+) is not transported, but it plays an essential structural role and its presence is essential for fluoride channel function.</text>
</comment>
<comment type="subcellular location">
    <subcellularLocation>
        <location evidence="1">Cell membrane</location>
        <topology evidence="1">Multi-pass membrane protein</topology>
    </subcellularLocation>
</comment>
<comment type="similarity">
    <text evidence="1">Belongs to the fluoride channel Fluc/FEX (TC 1.A.43) family.</text>
</comment>
<reference key="1">
    <citation type="journal article" date="2005" name="Genome Res.">
        <title>Living with two extremes: conclusions from the genome sequence of Natronomonas pharaonis.</title>
        <authorList>
            <person name="Falb M."/>
            <person name="Pfeiffer F."/>
            <person name="Palm P."/>
            <person name="Rodewald K."/>
            <person name="Hickmann V."/>
            <person name="Tittor J."/>
            <person name="Oesterhelt D."/>
        </authorList>
    </citation>
    <scope>NUCLEOTIDE SEQUENCE [LARGE SCALE GENOMIC DNA]</scope>
    <source>
        <strain>ATCC 35678 / DSM 2160 / CIP 103997 / JCM 8858 / NBRC 14720 / NCIMB 2260 / Gabara</strain>
    </source>
</reference>
<organism>
    <name type="scientific">Natronomonas pharaonis (strain ATCC 35678 / DSM 2160 / CIP 103997 / JCM 8858 / NBRC 14720 / NCIMB 2260 / Gabara)</name>
    <name type="common">Halobacterium pharaonis</name>
    <dbReference type="NCBI Taxonomy" id="348780"/>
    <lineage>
        <taxon>Archaea</taxon>
        <taxon>Methanobacteriati</taxon>
        <taxon>Methanobacteriota</taxon>
        <taxon>Stenosarchaea group</taxon>
        <taxon>Halobacteria</taxon>
        <taxon>Halobacteriales</taxon>
        <taxon>Haloarculaceae</taxon>
        <taxon>Natronomonas</taxon>
    </lineage>
</organism>